<name>KSL2_SALMI</name>
<comment type="function">
    <text evidence="3">Involved in diterpenoid biosynthesis (PubMed:26077765). Catalyzes the conversion of ent-8alpha-hydroxylabd-13-en-15-yl diphosphate to ent-13-epi-manoyl oxide (PubMed:26077765).</text>
</comment>
<comment type="catalytic activity">
    <reaction evidence="3">
        <text>ent-8alpha-hydroxylabd-13-en-15-yl diphosphate = ent-13-epi-manoyl oxide + diphosphate</text>
        <dbReference type="Rhea" id="RHEA:18721"/>
        <dbReference type="ChEBI" id="CHEBI:33019"/>
        <dbReference type="ChEBI" id="CHEBI:138223"/>
        <dbReference type="ChEBI" id="CHEBI:138224"/>
        <dbReference type="EC" id="4.2.3.186"/>
    </reaction>
    <physiologicalReaction direction="left-to-right" evidence="3">
        <dbReference type="Rhea" id="RHEA:18722"/>
    </physiologicalReaction>
</comment>
<comment type="cofactor">
    <cofactor evidence="1">
        <name>Mg(2+)</name>
        <dbReference type="ChEBI" id="CHEBI:18420"/>
    </cofactor>
    <text evidence="1">Binds 3 Mg(2+) ions per subunit.</text>
</comment>
<comment type="pathway">
    <text evidence="5">Secondary metabolite biosynthesis; terpenoid biosynthesis.</text>
</comment>
<comment type="subcellular location">
    <subcellularLocation>
        <location evidence="2">Plastid</location>
        <location evidence="2">Chloroplast</location>
    </subcellularLocation>
</comment>
<comment type="domain">
    <text evidence="5">The Asp-Asp-Xaa-Xaa-Asp/Glu (DDXXD/E) motif is important for the catalytic activity, presumably through binding to Mg(2+).</text>
</comment>
<comment type="similarity">
    <text evidence="5">Belongs to the terpene synthase family.</text>
</comment>
<comment type="sequence caution" evidence="5">
    <conflict type="erroneous gene model prediction">
        <sequence resource="EMBL-CDS" id="AEZ55689"/>
    </conflict>
</comment>
<protein>
    <recommendedName>
        <fullName evidence="5">Ent-13-epi-manoyl oxide synthase KSL2, chloroplastic</fullName>
        <ecNumber evidence="3">4.2.3.186</ecNumber>
    </recommendedName>
    <alternativeName>
        <fullName evidence="4">Kaurene synthase-like 2</fullName>
        <shortName evidence="4">SmKSL2</shortName>
    </alternativeName>
</protein>
<gene>
    <name evidence="4" type="primary">KSL2</name>
</gene>
<keyword id="KW-0150">Chloroplast</keyword>
<keyword id="KW-0456">Lyase</keyword>
<keyword id="KW-0460">Magnesium</keyword>
<keyword id="KW-0479">Metal-binding</keyword>
<keyword id="KW-0934">Plastid</keyword>
<keyword id="KW-0809">Transit peptide</keyword>
<accession>H6VLG5</accession>
<accession>A0A0A7ANA5</accession>
<organism>
    <name type="scientific">Salvia miltiorrhiza</name>
    <name type="common">Chinese sage</name>
    <dbReference type="NCBI Taxonomy" id="226208"/>
    <lineage>
        <taxon>Eukaryota</taxon>
        <taxon>Viridiplantae</taxon>
        <taxon>Streptophyta</taxon>
        <taxon>Embryophyta</taxon>
        <taxon>Tracheophyta</taxon>
        <taxon>Spermatophyta</taxon>
        <taxon>Magnoliopsida</taxon>
        <taxon>eudicotyledons</taxon>
        <taxon>Gunneridae</taxon>
        <taxon>Pentapetalae</taxon>
        <taxon>asterids</taxon>
        <taxon>lamiids</taxon>
        <taxon>Lamiales</taxon>
        <taxon>Lamiaceae</taxon>
        <taxon>Nepetoideae</taxon>
        <taxon>Mentheae</taxon>
        <taxon>Salviinae</taxon>
        <taxon>Salvia</taxon>
        <taxon>Salvia incertae sedis</taxon>
    </lineage>
</organism>
<sequence>MALPLSTCLLFHPKESRSRRFCFSPASAASLKSGLHSATSAKIASMPTCFEQTRGRIAKLFHKDELSVSTYDTAWVAMVPSPTSLEEPCFPDCLNWLLENQCHDGSWARPHHHPLLKKDVLSSTLACILALKKWGVGEEQIKRGLHFLELNFASATDKCQITPMGFDIIFPAMLDYARGFSLNLRLDPTTFNDLMHKRDLELKRSNRNYSSETETYWAYIAEGMGELQNWESVMKYQRRNGSLFNCPSTTAAAFIALRNSDCLNYLHLALKKFGNAVSAVYPLDIYSQLCTVDNLERLGISQYFSTEIQNVLDETYRCWMQGNEEIFMDASTCALAFRTLRLNGYDVTSDPVTKILQECFSSSFRGNMTDINTTLELYRASELVLYPDERDLEKQNLRLKLLLEQELSSGLIQSCQLGRSINVLLISQVNQAIEYPFYAIMDRVAKRKSIEIYNFDNTRILKTSYCSPNFGNEDFHFLSIEDFNRCQAAHREELGELERWVVENRLDELKFARSKSAYCYFSAAATFFAPELLDARLSWAKNGVLTTVIDDFFDVGGSVEELKNLIQLVELWDVDICTECYSHNVQIIFSALRRTICEIGDKAFKLQGRCITNHIIAIWLDLLNSMMRETEWARDNFVPTIDEYMSNAHVSFALGPIVLPALYLVGPKLSEDMVNHSEYHNLFKLMSTCGRLLNDIHGYERELKDGKLNALSLYIINHGGEVSKEAAIWEMKSWIETQRRELLRLVLEGKKSVLPKPCRELFWHMCSVVHLFYSKGDGFTSQDLIQLVNTIIHQPILLNDQTGAGLSKLHD</sequence>
<feature type="transit peptide" description="Chloroplast" evidence="2">
    <location>
        <begin position="1"/>
        <end position="49"/>
    </location>
</feature>
<feature type="chain" id="PRO_0000449932" description="Ent-13-epi-manoyl oxide synthase KSL2, chloroplastic">
    <location>
        <begin position="50"/>
        <end position="811"/>
    </location>
</feature>
<feature type="short sequence motif" description="DDXXD motif" evidence="5">
    <location>
        <begin position="550"/>
        <end position="554"/>
    </location>
</feature>
<feature type="binding site" evidence="1">
    <location>
        <position position="550"/>
    </location>
    <ligand>
        <name>Mg(2+)</name>
        <dbReference type="ChEBI" id="CHEBI:18420"/>
        <label>1</label>
    </ligand>
</feature>
<feature type="binding site" evidence="1">
    <location>
        <position position="550"/>
    </location>
    <ligand>
        <name>Mg(2+)</name>
        <dbReference type="ChEBI" id="CHEBI:18420"/>
        <label>2</label>
    </ligand>
</feature>
<feature type="binding site" evidence="1">
    <location>
        <position position="554"/>
    </location>
    <ligand>
        <name>Mg(2+)</name>
        <dbReference type="ChEBI" id="CHEBI:18420"/>
        <label>1</label>
    </ligand>
</feature>
<feature type="binding site" evidence="1">
    <location>
        <position position="554"/>
    </location>
    <ligand>
        <name>Mg(2+)</name>
        <dbReference type="ChEBI" id="CHEBI:18420"/>
        <label>2</label>
    </ligand>
</feature>
<feature type="binding site" evidence="1">
    <location>
        <position position="694"/>
    </location>
    <ligand>
        <name>Mg(2+)</name>
        <dbReference type="ChEBI" id="CHEBI:18420"/>
        <label>3</label>
    </ligand>
</feature>
<feature type="binding site" evidence="1">
    <location>
        <position position="702"/>
    </location>
    <ligand>
        <name>Mg(2+)</name>
        <dbReference type="ChEBI" id="CHEBI:18420"/>
        <label>3</label>
    </ligand>
</feature>
<feature type="sequence conflict" description="In Ref. 1; AHJ59325." evidence="5" ref="1">
    <original>R</original>
    <variation>C</variation>
    <location>
        <position position="594"/>
    </location>
</feature>
<feature type="sequence conflict" description="In Ref. 1; AHJ59325." evidence="5" ref="1">
    <original>D</original>
    <variation>E</variation>
    <location>
        <position position="672"/>
    </location>
</feature>
<feature type="sequence conflict" description="In Ref. 1; AHJ59325." evidence="5" ref="1">
    <original>D</original>
    <variation>G</variation>
    <location>
        <position position="811"/>
    </location>
</feature>
<reference key="1">
    <citation type="journal article" date="2015" name="Plant Physiol.">
        <title>Functional divergence of diterpene syntheses in the medicinal plant Salvia miltiorrhiza.</title>
        <authorList>
            <person name="Cui G."/>
            <person name="Duan L."/>
            <person name="Jin B."/>
            <person name="Qian J."/>
            <person name="Xue Z."/>
            <person name="Shen G."/>
            <person name="Snyder J.H."/>
            <person name="Song J."/>
            <person name="Chen S."/>
            <person name="Huang L."/>
            <person name="Peters R.J."/>
            <person name="Qi X."/>
        </authorList>
    </citation>
    <scope>NUCLEOTIDE SEQUENCE [MRNA]</scope>
    <scope>FUNCTION</scope>
    <scope>CATALYTIC ACTIVITY</scope>
</reference>
<reference key="2">
    <citation type="journal article" date="2012" name="J. Exp. Bot.">
        <title>Genome-wide identification and characterization of novel genes involved in terpenoid biosynthesis in Salvia miltiorrhiza.</title>
        <authorList>
            <person name="Ma Y."/>
            <person name="Yuan L."/>
            <person name="Wu B."/>
            <person name="Li X."/>
            <person name="Chen S."/>
            <person name="Lu S."/>
        </authorList>
    </citation>
    <scope>NUCLEOTIDE SEQUENCE [GENOMIC DNA] OF 51-811</scope>
    <scope>INDUCTION BY JASMONATE</scope>
</reference>
<proteinExistence type="evidence at protein level"/>
<dbReference type="EC" id="4.2.3.186" evidence="3"/>
<dbReference type="EMBL" id="KC814643">
    <property type="protein sequence ID" value="AHJ59325.1"/>
    <property type="molecule type" value="mRNA"/>
</dbReference>
<dbReference type="EMBL" id="JN831119">
    <property type="protein sequence ID" value="AEZ55689.1"/>
    <property type="status" value="ALT_SEQ"/>
    <property type="molecule type" value="Genomic_DNA"/>
</dbReference>
<dbReference type="SMR" id="H6VLG5"/>
<dbReference type="KEGG" id="ag:AHJ59325"/>
<dbReference type="BRENDA" id="4.2.3.186">
    <property type="organism ID" value="14379"/>
</dbReference>
<dbReference type="UniPathway" id="UPA00213"/>
<dbReference type="GO" id="GO:0009507">
    <property type="term" value="C:chloroplast"/>
    <property type="evidence" value="ECO:0007669"/>
    <property type="project" value="UniProtKB-SubCell"/>
</dbReference>
<dbReference type="GO" id="GO:0000287">
    <property type="term" value="F:magnesium ion binding"/>
    <property type="evidence" value="ECO:0007669"/>
    <property type="project" value="InterPro"/>
</dbReference>
<dbReference type="GO" id="GO:0010333">
    <property type="term" value="F:terpene synthase activity"/>
    <property type="evidence" value="ECO:0007669"/>
    <property type="project" value="InterPro"/>
</dbReference>
<dbReference type="GO" id="GO:0009686">
    <property type="term" value="P:gibberellin biosynthetic process"/>
    <property type="evidence" value="ECO:0007669"/>
    <property type="project" value="TreeGrafter"/>
</dbReference>
<dbReference type="CDD" id="cd00684">
    <property type="entry name" value="Terpene_cyclase_plant_C1"/>
    <property type="match status" value="1"/>
</dbReference>
<dbReference type="FunFam" id="1.50.10.160:FF:000002">
    <property type="entry name" value="cis-abienol synthase, chloroplastic"/>
    <property type="match status" value="1"/>
</dbReference>
<dbReference type="FunFam" id="1.50.10.130:FF:000002">
    <property type="entry name" value="Ent-copalyl diphosphate synthase, chloroplastic"/>
    <property type="match status" value="1"/>
</dbReference>
<dbReference type="FunFam" id="1.10.600.10:FF:000005">
    <property type="entry name" value="Ent-kaur-16-ene synthase, chloroplastic"/>
    <property type="match status" value="1"/>
</dbReference>
<dbReference type="Gene3D" id="1.50.10.160">
    <property type="match status" value="1"/>
</dbReference>
<dbReference type="Gene3D" id="1.10.600.10">
    <property type="entry name" value="Farnesyl Diphosphate Synthase"/>
    <property type="match status" value="1"/>
</dbReference>
<dbReference type="Gene3D" id="1.50.10.130">
    <property type="entry name" value="Terpene synthase, N-terminal domain"/>
    <property type="match status" value="1"/>
</dbReference>
<dbReference type="InterPro" id="IPR008949">
    <property type="entry name" value="Isoprenoid_synthase_dom_sf"/>
</dbReference>
<dbReference type="InterPro" id="IPR044814">
    <property type="entry name" value="Terpene_cyclase_plant_C1"/>
</dbReference>
<dbReference type="InterPro" id="IPR001906">
    <property type="entry name" value="Terpene_synth_N"/>
</dbReference>
<dbReference type="InterPro" id="IPR036965">
    <property type="entry name" value="Terpene_synth_N_sf"/>
</dbReference>
<dbReference type="InterPro" id="IPR050148">
    <property type="entry name" value="Terpene_synthase-like"/>
</dbReference>
<dbReference type="InterPro" id="IPR005630">
    <property type="entry name" value="Terpene_synthase_metal-bd"/>
</dbReference>
<dbReference type="InterPro" id="IPR008930">
    <property type="entry name" value="Terpenoid_cyclase/PrenylTrfase"/>
</dbReference>
<dbReference type="PANTHER" id="PTHR31739">
    <property type="entry name" value="ENT-COPALYL DIPHOSPHATE SYNTHASE, CHLOROPLASTIC"/>
    <property type="match status" value="1"/>
</dbReference>
<dbReference type="PANTHER" id="PTHR31739:SF3">
    <property type="entry name" value="ENT-KAUR-16-ENE SYNTHASE, CHLOROPLASTIC"/>
    <property type="match status" value="1"/>
</dbReference>
<dbReference type="Pfam" id="PF01397">
    <property type="entry name" value="Terpene_synth"/>
    <property type="match status" value="1"/>
</dbReference>
<dbReference type="Pfam" id="PF03936">
    <property type="entry name" value="Terpene_synth_C"/>
    <property type="match status" value="1"/>
</dbReference>
<dbReference type="SFLD" id="SFLDG01014">
    <property type="entry name" value="Terpene_Cyclase_Like_1_N-term"/>
    <property type="match status" value="1"/>
</dbReference>
<dbReference type="SUPFAM" id="SSF48239">
    <property type="entry name" value="Terpenoid cyclases/Protein prenyltransferases"/>
    <property type="match status" value="2"/>
</dbReference>
<dbReference type="SUPFAM" id="SSF48576">
    <property type="entry name" value="Terpenoid synthases"/>
    <property type="match status" value="1"/>
</dbReference>
<evidence type="ECO:0000250" key="1">
    <source>
        <dbReference type="UniProtKB" id="Q40577"/>
    </source>
</evidence>
<evidence type="ECO:0000255" key="2"/>
<evidence type="ECO:0000269" key="3">
    <source>
    </source>
</evidence>
<evidence type="ECO:0000303" key="4">
    <source>
    </source>
</evidence>
<evidence type="ECO:0000305" key="5"/>